<dbReference type="EMBL" id="X55792">
    <property type="protein sequence ID" value="CAA39317.1"/>
    <property type="molecule type" value="Genomic_DNA"/>
</dbReference>
<dbReference type="RefSeq" id="NP_597780.1">
    <property type="nucleotide sequence ID" value="NC_001416.1"/>
</dbReference>
<dbReference type="GeneID" id="2703532"/>
<dbReference type="KEGG" id="vg:2703532"/>
<dbReference type="GO" id="GO:0020002">
    <property type="term" value="C:host cell plasma membrane"/>
    <property type="evidence" value="ECO:0007669"/>
    <property type="project" value="UniProtKB-SubCell"/>
</dbReference>
<dbReference type="GO" id="GO:0016020">
    <property type="term" value="C:membrane"/>
    <property type="evidence" value="ECO:0007669"/>
    <property type="project" value="UniProtKB-KW"/>
</dbReference>
<dbReference type="InterPro" id="IPR010438">
    <property type="entry name" value="Lambda_Bor"/>
</dbReference>
<dbReference type="Pfam" id="PF06291">
    <property type="entry name" value="Lambda_Bor"/>
    <property type="match status" value="1"/>
</dbReference>
<protein>
    <recommendedName>
        <fullName>Lipoprotein bor</fullName>
    </recommendedName>
</protein>
<feature type="signal peptide" evidence="1">
    <location>
        <begin position="1"/>
        <end position="16"/>
    </location>
</feature>
<feature type="chain" id="PRO_0000003367" description="Lipoprotein bor">
    <location>
        <begin position="17"/>
        <end position="97"/>
    </location>
</feature>
<feature type="lipid moiety-binding region" description="N-palmitoyl cysteine; by host" evidence="1">
    <location>
        <position position="17"/>
    </location>
</feature>
<feature type="lipid moiety-binding region" description="S-diacylglycerol cysteine; by host" evidence="1">
    <location>
        <position position="17"/>
    </location>
</feature>
<gene>
    <name type="primary">bor</name>
</gene>
<sequence>MKKMLLATALALLITGCAQQTFTVQNKPAAVAPKETITHHFFVSGIGQKKTVDAAKICGGAENVVKTETQQTFVNGLLGFITLGIYTPLEARVYCSQ</sequence>
<evidence type="ECO:0000255" key="1"/>
<evidence type="ECO:0000305" key="2"/>
<comment type="function">
    <text>Not known; is expressed during lysogeny in Escherichia coli.</text>
</comment>
<comment type="subcellular location">
    <subcellularLocation>
        <location evidence="2">Host cell membrane</location>
        <topology evidence="2">Lipid-anchor</topology>
    </subcellularLocation>
</comment>
<comment type="similarity">
    <text evidence="2">Belongs to the lambda phage bor family.</text>
</comment>
<accession>P26814</accession>
<organismHost>
    <name type="scientific">Escherichia coli</name>
    <dbReference type="NCBI Taxonomy" id="562"/>
</organismHost>
<proteinExistence type="evidence at protein level"/>
<keyword id="KW-1032">Host cell membrane</keyword>
<keyword id="KW-1043">Host membrane</keyword>
<keyword id="KW-0449">Lipoprotein</keyword>
<keyword id="KW-0472">Membrane</keyword>
<keyword id="KW-0564">Palmitate</keyword>
<keyword id="KW-0732">Signal</keyword>
<organism>
    <name type="scientific">Escherichia phage lambda</name>
    <name type="common">Bacteriophage lambda</name>
    <dbReference type="NCBI Taxonomy" id="2681611"/>
    <lineage>
        <taxon>Viruses</taxon>
        <taxon>Duplodnaviria</taxon>
        <taxon>Heunggongvirae</taxon>
        <taxon>Uroviricota</taxon>
        <taxon>Caudoviricetes</taxon>
        <taxon>Lambdavirus</taxon>
        <taxon>Lambdavirus lambda</taxon>
    </lineage>
</organism>
<name>BOR_LAMBD</name>
<reference key="1">
    <citation type="journal article" date="1982" name="J. Mol. Biol.">
        <title>Nucleotide sequence of bacteriophage lambda DNA.</title>
        <authorList>
            <person name="Sanger F."/>
            <person name="Coulson A.R."/>
            <person name="Hong G.F."/>
            <person name="Hill D.F."/>
            <person name="Petersen G.B."/>
        </authorList>
    </citation>
    <scope>NUCLEOTIDE SEQUENCE [LARGE SCALE GENOMIC DNA]</scope>
</reference>
<reference key="2">
    <citation type="journal article" date="1990" name="Nature">
        <title>A bacterial virulence determinant encoded by lysogenic coliphage lambda.</title>
        <authorList>
            <person name="Barondes J.J."/>
            <person name="Beckwith J."/>
        </authorList>
    </citation>
    <scope>CHARACTERIZATION</scope>
</reference>